<protein>
    <recommendedName>
        <fullName evidence="1">Serine hydroxymethyltransferase</fullName>
        <shortName evidence="1">SHMT</shortName>
        <shortName evidence="1">Serine methylase</shortName>
        <ecNumber evidence="1">2.1.2.1</ecNumber>
    </recommendedName>
</protein>
<dbReference type="EC" id="2.1.2.1" evidence="1"/>
<dbReference type="EMBL" id="CP000482">
    <property type="protein sequence ID" value="ABK99360.1"/>
    <property type="molecule type" value="Genomic_DNA"/>
</dbReference>
<dbReference type="RefSeq" id="WP_011735637.1">
    <property type="nucleotide sequence ID" value="NC_008609.1"/>
</dbReference>
<dbReference type="SMR" id="A1APU0"/>
<dbReference type="STRING" id="338966.Ppro_1748"/>
<dbReference type="KEGG" id="ppd:Ppro_1748"/>
<dbReference type="eggNOG" id="COG0112">
    <property type="taxonomic scope" value="Bacteria"/>
</dbReference>
<dbReference type="HOGENOM" id="CLU_022477_2_1_7"/>
<dbReference type="OrthoDB" id="9803846at2"/>
<dbReference type="UniPathway" id="UPA00193"/>
<dbReference type="UniPathway" id="UPA00288">
    <property type="reaction ID" value="UER01023"/>
</dbReference>
<dbReference type="Proteomes" id="UP000006732">
    <property type="component" value="Chromosome"/>
</dbReference>
<dbReference type="GO" id="GO:0005829">
    <property type="term" value="C:cytosol"/>
    <property type="evidence" value="ECO:0007669"/>
    <property type="project" value="TreeGrafter"/>
</dbReference>
<dbReference type="GO" id="GO:0004372">
    <property type="term" value="F:glycine hydroxymethyltransferase activity"/>
    <property type="evidence" value="ECO:0007669"/>
    <property type="project" value="UniProtKB-UniRule"/>
</dbReference>
<dbReference type="GO" id="GO:0030170">
    <property type="term" value="F:pyridoxal phosphate binding"/>
    <property type="evidence" value="ECO:0007669"/>
    <property type="project" value="UniProtKB-UniRule"/>
</dbReference>
<dbReference type="GO" id="GO:0019264">
    <property type="term" value="P:glycine biosynthetic process from serine"/>
    <property type="evidence" value="ECO:0007669"/>
    <property type="project" value="UniProtKB-UniRule"/>
</dbReference>
<dbReference type="GO" id="GO:0035999">
    <property type="term" value="P:tetrahydrofolate interconversion"/>
    <property type="evidence" value="ECO:0007669"/>
    <property type="project" value="UniProtKB-UniRule"/>
</dbReference>
<dbReference type="CDD" id="cd00378">
    <property type="entry name" value="SHMT"/>
    <property type="match status" value="1"/>
</dbReference>
<dbReference type="FunFam" id="3.40.640.10:FF:000001">
    <property type="entry name" value="Serine hydroxymethyltransferase"/>
    <property type="match status" value="1"/>
</dbReference>
<dbReference type="FunFam" id="3.90.1150.10:FF:000003">
    <property type="entry name" value="Serine hydroxymethyltransferase"/>
    <property type="match status" value="1"/>
</dbReference>
<dbReference type="Gene3D" id="3.90.1150.10">
    <property type="entry name" value="Aspartate Aminotransferase, domain 1"/>
    <property type="match status" value="1"/>
</dbReference>
<dbReference type="Gene3D" id="3.40.640.10">
    <property type="entry name" value="Type I PLP-dependent aspartate aminotransferase-like (Major domain)"/>
    <property type="match status" value="1"/>
</dbReference>
<dbReference type="HAMAP" id="MF_00051">
    <property type="entry name" value="SHMT"/>
    <property type="match status" value="1"/>
</dbReference>
<dbReference type="InterPro" id="IPR015424">
    <property type="entry name" value="PyrdxlP-dep_Trfase"/>
</dbReference>
<dbReference type="InterPro" id="IPR015421">
    <property type="entry name" value="PyrdxlP-dep_Trfase_major"/>
</dbReference>
<dbReference type="InterPro" id="IPR015422">
    <property type="entry name" value="PyrdxlP-dep_Trfase_small"/>
</dbReference>
<dbReference type="InterPro" id="IPR001085">
    <property type="entry name" value="Ser_HO-MeTrfase"/>
</dbReference>
<dbReference type="InterPro" id="IPR049943">
    <property type="entry name" value="Ser_HO-MeTrfase-like"/>
</dbReference>
<dbReference type="InterPro" id="IPR019798">
    <property type="entry name" value="Ser_HO-MeTrfase_PLP_BS"/>
</dbReference>
<dbReference type="InterPro" id="IPR039429">
    <property type="entry name" value="SHMT-like_dom"/>
</dbReference>
<dbReference type="NCBIfam" id="NF000586">
    <property type="entry name" value="PRK00011.1"/>
    <property type="match status" value="1"/>
</dbReference>
<dbReference type="PANTHER" id="PTHR11680">
    <property type="entry name" value="SERINE HYDROXYMETHYLTRANSFERASE"/>
    <property type="match status" value="1"/>
</dbReference>
<dbReference type="PANTHER" id="PTHR11680:SF50">
    <property type="entry name" value="SERINE HYDROXYMETHYLTRANSFERASE"/>
    <property type="match status" value="1"/>
</dbReference>
<dbReference type="Pfam" id="PF00464">
    <property type="entry name" value="SHMT"/>
    <property type="match status" value="1"/>
</dbReference>
<dbReference type="PIRSF" id="PIRSF000412">
    <property type="entry name" value="SHMT"/>
    <property type="match status" value="1"/>
</dbReference>
<dbReference type="SUPFAM" id="SSF53383">
    <property type="entry name" value="PLP-dependent transferases"/>
    <property type="match status" value="1"/>
</dbReference>
<dbReference type="PROSITE" id="PS00096">
    <property type="entry name" value="SHMT"/>
    <property type="match status" value="1"/>
</dbReference>
<accession>A1APU0</accession>
<keyword id="KW-0028">Amino-acid biosynthesis</keyword>
<keyword id="KW-0963">Cytoplasm</keyword>
<keyword id="KW-0554">One-carbon metabolism</keyword>
<keyword id="KW-0663">Pyridoxal phosphate</keyword>
<keyword id="KW-1185">Reference proteome</keyword>
<keyword id="KW-0808">Transferase</keyword>
<comment type="function">
    <text evidence="1">Catalyzes the reversible interconversion of serine and glycine with tetrahydrofolate (THF) serving as the one-carbon carrier. This reaction serves as the major source of one-carbon groups required for the biosynthesis of purines, thymidylate, methionine, and other important biomolecules. Also exhibits THF-independent aldolase activity toward beta-hydroxyamino acids, producing glycine and aldehydes, via a retro-aldol mechanism.</text>
</comment>
<comment type="catalytic activity">
    <reaction evidence="1">
        <text>(6R)-5,10-methylene-5,6,7,8-tetrahydrofolate + glycine + H2O = (6S)-5,6,7,8-tetrahydrofolate + L-serine</text>
        <dbReference type="Rhea" id="RHEA:15481"/>
        <dbReference type="ChEBI" id="CHEBI:15377"/>
        <dbReference type="ChEBI" id="CHEBI:15636"/>
        <dbReference type="ChEBI" id="CHEBI:33384"/>
        <dbReference type="ChEBI" id="CHEBI:57305"/>
        <dbReference type="ChEBI" id="CHEBI:57453"/>
        <dbReference type="EC" id="2.1.2.1"/>
    </reaction>
</comment>
<comment type="cofactor">
    <cofactor evidence="1">
        <name>pyridoxal 5'-phosphate</name>
        <dbReference type="ChEBI" id="CHEBI:597326"/>
    </cofactor>
</comment>
<comment type="pathway">
    <text evidence="1">One-carbon metabolism; tetrahydrofolate interconversion.</text>
</comment>
<comment type="pathway">
    <text evidence="1">Amino-acid biosynthesis; glycine biosynthesis; glycine from L-serine: step 1/1.</text>
</comment>
<comment type="subunit">
    <text evidence="1">Homodimer.</text>
</comment>
<comment type="subcellular location">
    <subcellularLocation>
        <location evidence="1">Cytoplasm</location>
    </subcellularLocation>
</comment>
<comment type="similarity">
    <text evidence="1">Belongs to the SHMT family.</text>
</comment>
<gene>
    <name evidence="1" type="primary">glyA</name>
    <name type="ordered locus">Ppro_1748</name>
</gene>
<sequence>MSILSTLDPEVADAIRLEADRQEYNLELIASENFVSTAVLEAQGSVLTNKYAEGYPGKRYYGGCHNVDIVEALAIERAKQLFDAEHANVQPHSGSQANMAVYFSALKPGDTILGMNLSHGGHLTHGSPVNFSGRFFNVVPYGVSPETQTIDYAEVERLALEHKPKMIVVGASAYPRTIDFAAFRAIADKVGALVMVDMAHIAGLVAAGLHPSPIPHAEFVTTTTHKTLRGPRGGMILCQERFAKSINSQIFPGIQGGPLMHVIAAKAVAFKEALQPEFKQYQQQVVNNARTLAEELVKRGFKLTSGGTDNHLMLLDFSGTEITGKAAEEALDKAGITANKNTVPFETRSPFVTSGIRIGTPAATTHGLKEAEMVLVAGFIADAVANIGSDETLAAIKLQVNQLMKKFPLYAKG</sequence>
<feature type="chain" id="PRO_1000006290" description="Serine hydroxymethyltransferase">
    <location>
        <begin position="1"/>
        <end position="413"/>
    </location>
</feature>
<feature type="binding site" evidence="1">
    <location>
        <position position="117"/>
    </location>
    <ligand>
        <name>(6S)-5,6,7,8-tetrahydrofolate</name>
        <dbReference type="ChEBI" id="CHEBI:57453"/>
    </ligand>
</feature>
<feature type="binding site" evidence="1">
    <location>
        <begin position="121"/>
        <end position="123"/>
    </location>
    <ligand>
        <name>(6S)-5,6,7,8-tetrahydrofolate</name>
        <dbReference type="ChEBI" id="CHEBI:57453"/>
    </ligand>
</feature>
<feature type="binding site" evidence="1">
    <location>
        <begin position="349"/>
        <end position="351"/>
    </location>
    <ligand>
        <name>(6S)-5,6,7,8-tetrahydrofolate</name>
        <dbReference type="ChEBI" id="CHEBI:57453"/>
    </ligand>
</feature>
<feature type="site" description="Plays an important role in substrate specificity" evidence="1">
    <location>
        <position position="225"/>
    </location>
</feature>
<feature type="modified residue" description="N6-(pyridoxal phosphate)lysine" evidence="1">
    <location>
        <position position="226"/>
    </location>
</feature>
<evidence type="ECO:0000255" key="1">
    <source>
        <dbReference type="HAMAP-Rule" id="MF_00051"/>
    </source>
</evidence>
<name>GLYA_PELPD</name>
<reference key="1">
    <citation type="submission" date="2006-10" db="EMBL/GenBank/DDBJ databases">
        <title>Complete sequence of chromosome of Pelobacter propionicus DSM 2379.</title>
        <authorList>
            <consortium name="US DOE Joint Genome Institute"/>
            <person name="Copeland A."/>
            <person name="Lucas S."/>
            <person name="Lapidus A."/>
            <person name="Barry K."/>
            <person name="Detter J.C."/>
            <person name="Glavina del Rio T."/>
            <person name="Hammon N."/>
            <person name="Israni S."/>
            <person name="Dalin E."/>
            <person name="Tice H."/>
            <person name="Pitluck S."/>
            <person name="Saunders E."/>
            <person name="Brettin T."/>
            <person name="Bruce D."/>
            <person name="Han C."/>
            <person name="Tapia R."/>
            <person name="Schmutz J."/>
            <person name="Larimer F."/>
            <person name="Land M."/>
            <person name="Hauser L."/>
            <person name="Kyrpides N."/>
            <person name="Kim E."/>
            <person name="Lovley D."/>
            <person name="Richardson P."/>
        </authorList>
    </citation>
    <scope>NUCLEOTIDE SEQUENCE [LARGE SCALE GENOMIC DNA]</scope>
    <source>
        <strain>DSM 2379 / NBRC 103807 / OttBd1</strain>
    </source>
</reference>
<proteinExistence type="inferred from homology"/>
<organism>
    <name type="scientific">Pelobacter propionicus (strain DSM 2379 / NBRC 103807 / OttBd1)</name>
    <dbReference type="NCBI Taxonomy" id="338966"/>
    <lineage>
        <taxon>Bacteria</taxon>
        <taxon>Pseudomonadati</taxon>
        <taxon>Thermodesulfobacteriota</taxon>
        <taxon>Desulfuromonadia</taxon>
        <taxon>Desulfuromonadales</taxon>
        <taxon>Desulfuromonadaceae</taxon>
        <taxon>Pelobacter</taxon>
    </lineage>
</organism>